<geneLocation type="chloroplast"/>
<sequence length="1099" mass="126538">MYITPLFFPNLLKLQRKSFLTFLKYGIKKEIKKLDITKNKKKLLVYPNLFQLNLPTYTCNECVITSKTYNCELVIPIRLISYKDEIEWITLTNIPIMTNKCNFITNGSPRVIMSQITRAPGIYYHKENENTYYADIIAERGNWLRIEIDKKNNIWMKVKKVPKVPALMFLQALGVTKSNLIKLLKYPIPNQNHNLGNFKSQKEALEKIELYSQLESSINSRNLKNQNKITIFDRFMNPKYYDLGTRGRIQINKKFNNIEETIQHSTLTSKDFILAVHFLLKIKYKIEETDDIDNLKNKRVKIAGELIQSQFGIGILRLQKYVKDKLGNIKNNLHLTNIFSSTPINTTLAEFFGVNPLSQFMDEVNPLATLTHKRRLSSLGIGGVNRDTATLTIRSIHPTLYGRICPIETPEGKNAGLVNSFALFAEINSEGLIETPFFRVCNGRILYEMGINYLSANQEDKSNIVPFDIKKSRIGFLSKNKIAARIKQQFKEVSKKKVDFISISQLQMLSVATSLIPFMEHNDANRVLMGSNMQRQAVPLLKTECCLVGTGLETKIFFDLQDNVKSPPNGFISYLSLKKITISNIRNEHKSFNFKSNPLETITCIKSKSRNFNRLKYNLKDLLTNSKESLKITNYMSYVREQKIQYYIKQYNSSNQGTCSVNRLTLNEGQFIIKKNPLISGLSSCRNELALGKNLFVGYISWKGYNFEDAIVLNEQLVINNIYTSTHLEKFETEIKKNKENSEIITRDIKNISFLNKKNLDKNGIIKIGSRVFSDDILVGKLLPIETRILSPYRKLLYEILQKQNDHYRNTSLRVPKYKRGRITFVDYIKDKGKIKKKTEILKDLKTIKIHLMQNRLIQIGDKISGRHGNKGVISKILKIQEMPYLNDGIPLDILLNPLGVPSRMNIGQVLECLLGLSCFYLQRRFKVIPFDESFGFEVSRNFIYSNLYFSNIKTGNNWLLHPYYPGKNRIFDSYSGLPFDQPITIGKAYILKLIHLVEEKVHARSTGSYSLVTQQPLKGKSKKGGQRVGEMEVWALEGYGAAYTLHEILTVKSDDIKSRQKVLTSILNSETIKFGTTETFKVLIRELQSLCLNIQFFK</sequence>
<protein>
    <recommendedName>
        <fullName evidence="1">DNA-directed RNA polymerase subunit beta</fullName>
        <ecNumber evidence="1">2.7.7.6</ecNumber>
    </recommendedName>
    <alternativeName>
        <fullName evidence="1">PEP</fullName>
    </alternativeName>
    <alternativeName>
        <fullName evidence="1">Plastid-encoded RNA polymerase subunit beta</fullName>
        <shortName evidence="1">RNA polymerase subunit beta</shortName>
    </alternativeName>
</protein>
<proteinExistence type="inferred from homology"/>
<reference key="1">
    <citation type="journal article" date="2007" name="Mol. Biol. Evol.">
        <title>The complete chloroplast genome of the chlorarachniophyte Bigelowiella natans: evidence for independent origins of chlorarachniophyte and euglenid secondary endosymbionts.</title>
        <authorList>
            <person name="Rogers M.B."/>
            <person name="Gilson P.R."/>
            <person name="Su V."/>
            <person name="McFadden G.I."/>
            <person name="Keeling P.J."/>
        </authorList>
    </citation>
    <scope>NUCLEOTIDE SEQUENCE [LARGE SCALE GENOMIC DNA]</scope>
</reference>
<comment type="function">
    <text evidence="1">DNA-dependent RNA polymerase catalyzes the transcription of DNA into RNA using the four ribonucleoside triphosphates as substrates.</text>
</comment>
<comment type="catalytic activity">
    <reaction evidence="1">
        <text>RNA(n) + a ribonucleoside 5'-triphosphate = RNA(n+1) + diphosphate</text>
        <dbReference type="Rhea" id="RHEA:21248"/>
        <dbReference type="Rhea" id="RHEA-COMP:14527"/>
        <dbReference type="Rhea" id="RHEA-COMP:17342"/>
        <dbReference type="ChEBI" id="CHEBI:33019"/>
        <dbReference type="ChEBI" id="CHEBI:61557"/>
        <dbReference type="ChEBI" id="CHEBI:140395"/>
        <dbReference type="EC" id="2.7.7.6"/>
    </reaction>
</comment>
<comment type="subunit">
    <text evidence="1">In plastids the minimal PEP RNA polymerase catalytic core is composed of four subunits: alpha, beta, beta', and beta''. When a (nuclear-encoded) sigma factor is associated with the core the holoenzyme is formed, which can initiate transcription.</text>
</comment>
<comment type="subcellular location">
    <subcellularLocation>
        <location>Plastid</location>
        <location>Chloroplast</location>
    </subcellularLocation>
</comment>
<comment type="similarity">
    <text evidence="1">Belongs to the RNA polymerase beta chain family.</text>
</comment>
<gene>
    <name evidence="1" type="primary">rpoB</name>
</gene>
<evidence type="ECO:0000255" key="1">
    <source>
        <dbReference type="HAMAP-Rule" id="MF_01321"/>
    </source>
</evidence>
<dbReference type="EC" id="2.7.7.6" evidence="1"/>
<dbReference type="EMBL" id="DQ851108">
    <property type="protein sequence ID" value="ABG91442.1"/>
    <property type="molecule type" value="Genomic_DNA"/>
</dbReference>
<dbReference type="RefSeq" id="YP_778610.1">
    <property type="nucleotide sequence ID" value="NC_008408.1"/>
</dbReference>
<dbReference type="SMR" id="Q06J17"/>
<dbReference type="GeneID" id="4353027"/>
<dbReference type="GO" id="GO:0009507">
    <property type="term" value="C:chloroplast"/>
    <property type="evidence" value="ECO:0007669"/>
    <property type="project" value="UniProtKB-SubCell"/>
</dbReference>
<dbReference type="GO" id="GO:0000428">
    <property type="term" value="C:DNA-directed RNA polymerase complex"/>
    <property type="evidence" value="ECO:0007669"/>
    <property type="project" value="UniProtKB-KW"/>
</dbReference>
<dbReference type="GO" id="GO:0005739">
    <property type="term" value="C:mitochondrion"/>
    <property type="evidence" value="ECO:0007669"/>
    <property type="project" value="GOC"/>
</dbReference>
<dbReference type="GO" id="GO:0003677">
    <property type="term" value="F:DNA binding"/>
    <property type="evidence" value="ECO:0007669"/>
    <property type="project" value="UniProtKB-UniRule"/>
</dbReference>
<dbReference type="GO" id="GO:0003899">
    <property type="term" value="F:DNA-directed RNA polymerase activity"/>
    <property type="evidence" value="ECO:0007669"/>
    <property type="project" value="UniProtKB-UniRule"/>
</dbReference>
<dbReference type="GO" id="GO:0032549">
    <property type="term" value="F:ribonucleoside binding"/>
    <property type="evidence" value="ECO:0007669"/>
    <property type="project" value="InterPro"/>
</dbReference>
<dbReference type="GO" id="GO:0006351">
    <property type="term" value="P:DNA-templated transcription"/>
    <property type="evidence" value="ECO:0007669"/>
    <property type="project" value="UniProtKB-UniRule"/>
</dbReference>
<dbReference type="CDD" id="cd00653">
    <property type="entry name" value="RNA_pol_B_RPB2"/>
    <property type="match status" value="1"/>
</dbReference>
<dbReference type="Gene3D" id="2.40.50.100">
    <property type="match status" value="1"/>
</dbReference>
<dbReference type="Gene3D" id="3.90.1100.10">
    <property type="match status" value="1"/>
</dbReference>
<dbReference type="Gene3D" id="2.30.150.10">
    <property type="entry name" value="DNA-directed RNA polymerase, beta subunit, external 1 domain"/>
    <property type="match status" value="1"/>
</dbReference>
<dbReference type="Gene3D" id="2.40.270.10">
    <property type="entry name" value="DNA-directed RNA polymerase, subunit 2, domain 6"/>
    <property type="match status" value="3"/>
</dbReference>
<dbReference type="Gene3D" id="3.90.1800.10">
    <property type="entry name" value="RNA polymerase alpha subunit dimerisation domain"/>
    <property type="match status" value="1"/>
</dbReference>
<dbReference type="Gene3D" id="3.90.1110.10">
    <property type="entry name" value="RNA polymerase Rpb2, domain 2"/>
    <property type="match status" value="1"/>
</dbReference>
<dbReference type="HAMAP" id="MF_01321">
    <property type="entry name" value="RNApol_bact_RpoB"/>
    <property type="match status" value="1"/>
</dbReference>
<dbReference type="InterPro" id="IPR042107">
    <property type="entry name" value="DNA-dir_RNA_pol_bsu_ext_1_sf"/>
</dbReference>
<dbReference type="InterPro" id="IPR019462">
    <property type="entry name" value="DNA-dir_RNA_pol_bsu_external_1"/>
</dbReference>
<dbReference type="InterPro" id="IPR015712">
    <property type="entry name" value="DNA-dir_RNA_pol_su2"/>
</dbReference>
<dbReference type="InterPro" id="IPR007120">
    <property type="entry name" value="DNA-dir_RNAP_su2_dom"/>
</dbReference>
<dbReference type="InterPro" id="IPR037033">
    <property type="entry name" value="DNA-dir_RNAP_su2_hyb_sf"/>
</dbReference>
<dbReference type="InterPro" id="IPR010243">
    <property type="entry name" value="RNA_pol_bsu_bac"/>
</dbReference>
<dbReference type="InterPro" id="IPR007121">
    <property type="entry name" value="RNA_pol_bsu_CS"/>
</dbReference>
<dbReference type="InterPro" id="IPR007642">
    <property type="entry name" value="RNA_pol_Rpb2_2"/>
</dbReference>
<dbReference type="InterPro" id="IPR037034">
    <property type="entry name" value="RNA_pol_Rpb2_2_sf"/>
</dbReference>
<dbReference type="InterPro" id="IPR007645">
    <property type="entry name" value="RNA_pol_Rpb2_3"/>
</dbReference>
<dbReference type="InterPro" id="IPR007641">
    <property type="entry name" value="RNA_pol_Rpb2_7"/>
</dbReference>
<dbReference type="NCBIfam" id="NF001616">
    <property type="entry name" value="PRK00405.1"/>
    <property type="match status" value="1"/>
</dbReference>
<dbReference type="PANTHER" id="PTHR20856">
    <property type="entry name" value="DNA-DIRECTED RNA POLYMERASE I SUBUNIT 2"/>
    <property type="match status" value="1"/>
</dbReference>
<dbReference type="Pfam" id="PF04561">
    <property type="entry name" value="RNA_pol_Rpb2_2"/>
    <property type="match status" value="1"/>
</dbReference>
<dbReference type="Pfam" id="PF04565">
    <property type="entry name" value="RNA_pol_Rpb2_3"/>
    <property type="match status" value="1"/>
</dbReference>
<dbReference type="Pfam" id="PF10385">
    <property type="entry name" value="RNA_pol_Rpb2_45"/>
    <property type="match status" value="1"/>
</dbReference>
<dbReference type="Pfam" id="PF00562">
    <property type="entry name" value="RNA_pol_Rpb2_6"/>
    <property type="match status" value="1"/>
</dbReference>
<dbReference type="Pfam" id="PF04560">
    <property type="entry name" value="RNA_pol_Rpb2_7"/>
    <property type="match status" value="1"/>
</dbReference>
<dbReference type="SUPFAM" id="SSF64484">
    <property type="entry name" value="beta and beta-prime subunits of DNA dependent RNA-polymerase"/>
    <property type="match status" value="1"/>
</dbReference>
<dbReference type="PROSITE" id="PS01166">
    <property type="entry name" value="RNA_POL_BETA"/>
    <property type="match status" value="1"/>
</dbReference>
<organism>
    <name type="scientific">Bigelowiella natans</name>
    <name type="common">Pedinomonas minutissima</name>
    <name type="synonym">Chlorarachnion sp. (strain CCMP621)</name>
    <dbReference type="NCBI Taxonomy" id="227086"/>
    <lineage>
        <taxon>Eukaryota</taxon>
        <taxon>Sar</taxon>
        <taxon>Rhizaria</taxon>
        <taxon>Cercozoa</taxon>
        <taxon>Chlorarachniophyceae</taxon>
        <taxon>Bigelowiella</taxon>
    </lineage>
</organism>
<accession>Q06J17</accession>
<keyword id="KW-0150">Chloroplast</keyword>
<keyword id="KW-0240">DNA-directed RNA polymerase</keyword>
<keyword id="KW-0548">Nucleotidyltransferase</keyword>
<keyword id="KW-0934">Plastid</keyword>
<keyword id="KW-0804">Transcription</keyword>
<keyword id="KW-0808">Transferase</keyword>
<name>RPOB_BIGNA</name>
<feature type="chain" id="PRO_0000300458" description="DNA-directed RNA polymerase subunit beta">
    <location>
        <begin position="1"/>
        <end position="1099"/>
    </location>
</feature>